<dbReference type="EC" id="3.6.5.-" evidence="15"/>
<dbReference type="EMBL" id="AJ496730">
    <property type="protein sequence ID" value="CAD43139.1"/>
    <property type="molecule type" value="mRNA"/>
</dbReference>
<dbReference type="EMBL" id="AJ517412">
    <property type="protein sequence ID" value="CAD56956.1"/>
    <property type="molecule type" value="mRNA"/>
</dbReference>
<dbReference type="EMBL" id="AY094972">
    <property type="protein sequence ID" value="AAM15734.1"/>
    <property type="molecule type" value="mRNA"/>
</dbReference>
<dbReference type="EMBL" id="AL136929">
    <property type="protein sequence ID" value="CAB66863.1"/>
    <property type="molecule type" value="mRNA"/>
</dbReference>
<dbReference type="EMBL" id="AK001902">
    <property type="protein sequence ID" value="BAA91969.1"/>
    <property type="status" value="ALT_INIT"/>
    <property type="molecule type" value="mRNA"/>
</dbReference>
<dbReference type="EMBL" id="AK022695">
    <property type="protein sequence ID" value="BAB14185.1"/>
    <property type="status" value="ALT_INIT"/>
    <property type="molecule type" value="mRNA"/>
</dbReference>
<dbReference type="EMBL" id="AK294407">
    <property type="protein sequence ID" value="BAG57659.1"/>
    <property type="molecule type" value="mRNA"/>
</dbReference>
<dbReference type="EMBL" id="AC116407">
    <property type="status" value="NOT_ANNOTATED_CDS"/>
    <property type="molecule type" value="Genomic_DNA"/>
</dbReference>
<dbReference type="EMBL" id="AC026620">
    <property type="status" value="NOT_ANNOTATED_CDS"/>
    <property type="molecule type" value="Genomic_DNA"/>
</dbReference>
<dbReference type="EMBL" id="BC015698">
    <property type="protein sequence ID" value="AAH15698.1"/>
    <property type="molecule type" value="mRNA"/>
</dbReference>
<dbReference type="EMBL" id="BC041114">
    <property type="protein sequence ID" value="AAH41114.1"/>
    <property type="status" value="ALT_INIT"/>
    <property type="molecule type" value="mRNA"/>
</dbReference>
<dbReference type="EMBL" id="BC051818">
    <property type="protein sequence ID" value="AAH51818.1"/>
    <property type="molecule type" value="mRNA"/>
</dbReference>
<dbReference type="EMBL" id="BC060781">
    <property type="protein sequence ID" value="AAH60781.2"/>
    <property type="molecule type" value="mRNA"/>
</dbReference>
<dbReference type="EMBL" id="BC068463">
    <property type="protein sequence ID" value="AAH68463.1"/>
    <property type="status" value="ALT_INIT"/>
    <property type="molecule type" value="mRNA"/>
</dbReference>
<dbReference type="EMBL" id="BC125104">
    <property type="protein sequence ID" value="AAI25105.1"/>
    <property type="molecule type" value="mRNA"/>
</dbReference>
<dbReference type="EMBL" id="BC125105">
    <property type="protein sequence ID" value="AAI25106.1"/>
    <property type="molecule type" value="mRNA"/>
</dbReference>
<dbReference type="CCDS" id="CCDS32610.1">
    <molecule id="Q8IXI2-3"/>
</dbReference>
<dbReference type="CCDS" id="CCDS32611.1">
    <molecule id="Q8IXI2-7"/>
</dbReference>
<dbReference type="CCDS" id="CCDS32612.1">
    <molecule id="Q8IXI2-1"/>
</dbReference>
<dbReference type="CCDS" id="CCDS74030.1">
    <molecule id="Q8IXI2-2"/>
</dbReference>
<dbReference type="RefSeq" id="NP_001028738.1">
    <molecule id="Q8IXI2-7"/>
    <property type="nucleotide sequence ID" value="NM_001033566.3"/>
</dbReference>
<dbReference type="RefSeq" id="NP_001028739.2">
    <property type="nucleotide sequence ID" value="NM_001033567.2"/>
</dbReference>
<dbReference type="RefSeq" id="NP_001028740.1">
    <molecule id="Q8IXI2-3"/>
    <property type="nucleotide sequence ID" value="NM_001033568.3"/>
</dbReference>
<dbReference type="RefSeq" id="NP_001275683.1">
    <molecule id="Q8IXI2-2"/>
    <property type="nucleotide sequence ID" value="NM_001288754.2"/>
</dbReference>
<dbReference type="RefSeq" id="NP_001275684.1">
    <property type="nucleotide sequence ID" value="NM_001288755.1"/>
</dbReference>
<dbReference type="RefSeq" id="NP_001275687.1">
    <property type="nucleotide sequence ID" value="NM_001288758.1"/>
</dbReference>
<dbReference type="RefSeq" id="NP_060777.3">
    <molecule id="Q8IXI2-1"/>
    <property type="nucleotide sequence ID" value="NM_018307.4"/>
</dbReference>
<dbReference type="PDB" id="5KSO">
    <property type="method" value="X-ray"/>
    <property type="resolution" value="2.25 A"/>
    <property type="chains" value="A=411-592"/>
</dbReference>
<dbReference type="PDB" id="5KSP">
    <property type="method" value="X-ray"/>
    <property type="resolution" value="2.16 A"/>
    <property type="chains" value="A/B=411-592"/>
</dbReference>
<dbReference type="PDB" id="5KSY">
    <property type="method" value="X-ray"/>
    <property type="resolution" value="2.48 A"/>
    <property type="chains" value="A=411-592"/>
</dbReference>
<dbReference type="PDB" id="5KSZ">
    <property type="method" value="X-ray"/>
    <property type="resolution" value="2.50 A"/>
    <property type="chains" value="A=177-592"/>
</dbReference>
<dbReference type="PDB" id="5KTY">
    <property type="method" value="X-ray"/>
    <property type="resolution" value="2.52 A"/>
    <property type="chains" value="A=177-592"/>
</dbReference>
<dbReference type="PDB" id="5KU1">
    <property type="method" value="X-ray"/>
    <property type="resolution" value="2.50 A"/>
    <property type="chains" value="A=177-592"/>
</dbReference>
<dbReference type="PDB" id="6D71">
    <property type="method" value="X-ray"/>
    <property type="resolution" value="1.72 A"/>
    <property type="chains" value="A/B=2-180"/>
</dbReference>
<dbReference type="PDBsum" id="5KSO"/>
<dbReference type="PDBsum" id="5KSP"/>
<dbReference type="PDBsum" id="5KSY"/>
<dbReference type="PDBsum" id="5KSZ"/>
<dbReference type="PDBsum" id="5KTY"/>
<dbReference type="PDBsum" id="5KU1"/>
<dbReference type="PDBsum" id="6D71"/>
<dbReference type="SMR" id="Q8IXI2"/>
<dbReference type="BioGRID" id="120576">
    <property type="interactions" value="93"/>
</dbReference>
<dbReference type="CORUM" id="Q8IXI2"/>
<dbReference type="DIP" id="DIP-39114N"/>
<dbReference type="FunCoup" id="Q8IXI2">
    <property type="interactions" value="3098"/>
</dbReference>
<dbReference type="IntAct" id="Q8IXI2">
    <property type="interactions" value="48"/>
</dbReference>
<dbReference type="MINT" id="Q8IXI2"/>
<dbReference type="STRING" id="9606.ENSP00000351132"/>
<dbReference type="GlyGen" id="Q8IXI2">
    <property type="glycosylation" value="1 site, 1 O-linked glycan (1 site)"/>
</dbReference>
<dbReference type="iPTMnet" id="Q8IXI2"/>
<dbReference type="PhosphoSitePlus" id="Q8IXI2"/>
<dbReference type="SwissPalm" id="Q8IXI2"/>
<dbReference type="BioMuta" id="RHOT1"/>
<dbReference type="DMDM" id="108860796"/>
<dbReference type="jPOST" id="Q8IXI2"/>
<dbReference type="MassIVE" id="Q8IXI2"/>
<dbReference type="PeptideAtlas" id="Q8IXI2"/>
<dbReference type="ProteomicsDB" id="71002">
    <molecule id="Q8IXI2-1"/>
</dbReference>
<dbReference type="ProteomicsDB" id="71003">
    <molecule id="Q8IXI2-2"/>
</dbReference>
<dbReference type="ProteomicsDB" id="71004">
    <molecule id="Q8IXI2-3"/>
</dbReference>
<dbReference type="ProteomicsDB" id="71005">
    <molecule id="Q8IXI2-4"/>
</dbReference>
<dbReference type="ProteomicsDB" id="71006">
    <molecule id="Q8IXI2-5"/>
</dbReference>
<dbReference type="ProteomicsDB" id="71007">
    <molecule id="Q8IXI2-6"/>
</dbReference>
<dbReference type="Pumba" id="Q8IXI2"/>
<dbReference type="Antibodypedia" id="2419">
    <property type="antibodies" value="253 antibodies from 26 providers"/>
</dbReference>
<dbReference type="DNASU" id="55288"/>
<dbReference type="Ensembl" id="ENST00000333942.10">
    <molecule id="Q8IXI2-1"/>
    <property type="protein sequence ID" value="ENSP00000334724.6"/>
    <property type="gene ID" value="ENSG00000126858.19"/>
</dbReference>
<dbReference type="Ensembl" id="ENST00000358365.7">
    <molecule id="Q8IXI2-3"/>
    <property type="protein sequence ID" value="ENSP00000351132.3"/>
    <property type="gene ID" value="ENSG00000126858.19"/>
</dbReference>
<dbReference type="Ensembl" id="ENST00000394692.6">
    <molecule id="Q8IXI2-2"/>
    <property type="protein sequence ID" value="ENSP00000378184.2"/>
    <property type="gene ID" value="ENSG00000126858.19"/>
</dbReference>
<dbReference type="Ensembl" id="ENST00000545287.7">
    <molecule id="Q8IXI2-7"/>
    <property type="protein sequence ID" value="ENSP00000439737.2"/>
    <property type="gene ID" value="ENSG00000126858.19"/>
</dbReference>
<dbReference type="Ensembl" id="ENST00000581031.5">
    <molecule id="Q8IXI2-5"/>
    <property type="protein sequence ID" value="ENSP00000464094.1"/>
    <property type="gene ID" value="ENSG00000126858.19"/>
</dbReference>
<dbReference type="Ensembl" id="ENST00000581094.5">
    <molecule id="Q8IXI2-4"/>
    <property type="protein sequence ID" value="ENSP00000462669.1"/>
    <property type="gene ID" value="ENSG00000126858.19"/>
</dbReference>
<dbReference type="GeneID" id="55288"/>
<dbReference type="KEGG" id="hsa:55288"/>
<dbReference type="MANE-Select" id="ENST00000545287.7">
    <molecule id="Q8IXI2-7"/>
    <property type="protein sequence ID" value="ENSP00000439737.2"/>
    <property type="RefSeq nucleotide sequence ID" value="NM_001033566.3"/>
    <property type="RefSeq protein sequence ID" value="NP_001028738.1"/>
</dbReference>
<dbReference type="UCSC" id="uc002hgv.4">
    <molecule id="Q8IXI2-1"/>
    <property type="organism name" value="human"/>
</dbReference>
<dbReference type="AGR" id="HGNC:21168"/>
<dbReference type="CTD" id="55288"/>
<dbReference type="DisGeNET" id="55288"/>
<dbReference type="GeneCards" id="RHOT1"/>
<dbReference type="HGNC" id="HGNC:21168">
    <property type="gene designation" value="RHOT1"/>
</dbReference>
<dbReference type="HPA" id="ENSG00000126858">
    <property type="expression patterns" value="Low tissue specificity"/>
</dbReference>
<dbReference type="MIM" id="613888">
    <property type="type" value="gene"/>
</dbReference>
<dbReference type="neXtProt" id="NX_Q8IXI2"/>
<dbReference type="OpenTargets" id="ENSG00000126858"/>
<dbReference type="PharmGKB" id="PA134906318"/>
<dbReference type="VEuPathDB" id="HostDB:ENSG00000126858"/>
<dbReference type="eggNOG" id="KOG1707">
    <property type="taxonomic scope" value="Eukaryota"/>
</dbReference>
<dbReference type="GeneTree" id="ENSGT00940000155641"/>
<dbReference type="HOGENOM" id="CLU_014255_3_1_1"/>
<dbReference type="InParanoid" id="Q8IXI2"/>
<dbReference type="OMA" id="HETTWGI"/>
<dbReference type="OrthoDB" id="10020961at2759"/>
<dbReference type="PAN-GO" id="Q8IXI2">
    <property type="GO annotations" value="6 GO annotations based on evolutionary models"/>
</dbReference>
<dbReference type="PhylomeDB" id="Q8IXI2"/>
<dbReference type="TreeFam" id="TF300814"/>
<dbReference type="PathwayCommons" id="Q8IXI2"/>
<dbReference type="Reactome" id="R-HSA-5689880">
    <property type="pathway name" value="Ub-specific processing proteases"/>
</dbReference>
<dbReference type="Reactome" id="R-HSA-9013425">
    <property type="pathway name" value="RHOT1 GTPase cycle"/>
</dbReference>
<dbReference type="SignaLink" id="Q8IXI2"/>
<dbReference type="SIGNOR" id="Q8IXI2"/>
<dbReference type="BioGRID-ORCS" id="55288">
    <property type="hits" value="32 hits in 1155 CRISPR screens"/>
</dbReference>
<dbReference type="CD-CODE" id="FB4E32DD">
    <property type="entry name" value="Presynaptic clusters and postsynaptic densities"/>
</dbReference>
<dbReference type="ChiTaRS" id="RHOT1">
    <property type="organism name" value="human"/>
</dbReference>
<dbReference type="GeneWiki" id="RHOT1"/>
<dbReference type="GenomeRNAi" id="55288"/>
<dbReference type="Pharos" id="Q8IXI2">
    <property type="development level" value="Tbio"/>
</dbReference>
<dbReference type="PRO" id="PR:Q8IXI2"/>
<dbReference type="Proteomes" id="UP000005640">
    <property type="component" value="Chromosome 17"/>
</dbReference>
<dbReference type="RNAct" id="Q8IXI2">
    <property type="molecule type" value="protein"/>
</dbReference>
<dbReference type="Bgee" id="ENSG00000126858">
    <property type="expression patterns" value="Expressed in endothelial cell and 203 other cell types or tissues"/>
</dbReference>
<dbReference type="ExpressionAtlas" id="Q8IXI2">
    <property type="expression patterns" value="baseline and differential"/>
</dbReference>
<dbReference type="GO" id="GO:0016020">
    <property type="term" value="C:membrane"/>
    <property type="evidence" value="ECO:0007005"/>
    <property type="project" value="UniProtKB"/>
</dbReference>
<dbReference type="GO" id="GO:0005741">
    <property type="term" value="C:mitochondrial outer membrane"/>
    <property type="evidence" value="ECO:0000314"/>
    <property type="project" value="UniProtKB"/>
</dbReference>
<dbReference type="GO" id="GO:0005739">
    <property type="term" value="C:mitochondrion"/>
    <property type="evidence" value="ECO:0006056"/>
    <property type="project" value="FlyBase"/>
</dbReference>
<dbReference type="GO" id="GO:0005509">
    <property type="term" value="F:calcium ion binding"/>
    <property type="evidence" value="ECO:0007669"/>
    <property type="project" value="InterPro"/>
</dbReference>
<dbReference type="GO" id="GO:0005525">
    <property type="term" value="F:GTP binding"/>
    <property type="evidence" value="ECO:0000318"/>
    <property type="project" value="GO_Central"/>
</dbReference>
<dbReference type="GO" id="GO:0003924">
    <property type="term" value="F:GTPase activity"/>
    <property type="evidence" value="ECO:0000318"/>
    <property type="project" value="GO_Central"/>
</dbReference>
<dbReference type="GO" id="GO:0019725">
    <property type="term" value="P:cellular homeostasis"/>
    <property type="evidence" value="ECO:0000315"/>
    <property type="project" value="UniProtKB"/>
</dbReference>
<dbReference type="GO" id="GO:0097345">
    <property type="term" value="P:mitochondrial outer membrane permeabilization"/>
    <property type="evidence" value="ECO:0000315"/>
    <property type="project" value="UniProtKB"/>
</dbReference>
<dbReference type="GO" id="GO:0007005">
    <property type="term" value="P:mitochondrion organization"/>
    <property type="evidence" value="ECO:0000318"/>
    <property type="project" value="GO_Central"/>
</dbReference>
<dbReference type="GO" id="GO:0047497">
    <property type="term" value="P:mitochondrion transport along microtubule"/>
    <property type="evidence" value="ECO:0000315"/>
    <property type="project" value="UniProtKB"/>
</dbReference>
<dbReference type="GO" id="GO:0010821">
    <property type="term" value="P:regulation of mitochondrion organization"/>
    <property type="evidence" value="ECO:0000315"/>
    <property type="project" value="UniProtKB"/>
</dbReference>
<dbReference type="CDD" id="cd01893">
    <property type="entry name" value="Miro1"/>
    <property type="match status" value="1"/>
</dbReference>
<dbReference type="CDD" id="cd01892">
    <property type="entry name" value="Miro2"/>
    <property type="match status" value="1"/>
</dbReference>
<dbReference type="FunFam" id="1.10.238.10:FF:000011">
    <property type="entry name" value="Mitochondrial Rho GTPase"/>
    <property type="match status" value="1"/>
</dbReference>
<dbReference type="FunFam" id="1.10.238.10:FF:000021">
    <property type="entry name" value="Mitochondrial Rho GTPase"/>
    <property type="match status" value="1"/>
</dbReference>
<dbReference type="FunFam" id="3.40.50.300:FF:000170">
    <property type="entry name" value="Mitochondrial Rho GTPase"/>
    <property type="match status" value="1"/>
</dbReference>
<dbReference type="FunFam" id="3.40.50.300:FF:000248">
    <property type="entry name" value="Mitochondrial Rho GTPase"/>
    <property type="match status" value="1"/>
</dbReference>
<dbReference type="Gene3D" id="1.10.238.10">
    <property type="entry name" value="EF-hand"/>
    <property type="match status" value="2"/>
</dbReference>
<dbReference type="Gene3D" id="3.40.50.300">
    <property type="entry name" value="P-loop containing nucleotide triphosphate hydrolases"/>
    <property type="match status" value="2"/>
</dbReference>
<dbReference type="InterPro" id="IPR011992">
    <property type="entry name" value="EF-hand-dom_pair"/>
</dbReference>
<dbReference type="InterPro" id="IPR018247">
    <property type="entry name" value="EF_Hand_1_Ca_BS"/>
</dbReference>
<dbReference type="InterPro" id="IPR013566">
    <property type="entry name" value="EF_hand_assoc_1"/>
</dbReference>
<dbReference type="InterPro" id="IPR013567">
    <property type="entry name" value="EF_hand_assoc_2"/>
</dbReference>
<dbReference type="InterPro" id="IPR002048">
    <property type="entry name" value="EF_hand_dom"/>
</dbReference>
<dbReference type="InterPro" id="IPR021181">
    <property type="entry name" value="Miro"/>
</dbReference>
<dbReference type="InterPro" id="IPR052266">
    <property type="entry name" value="Miro-EF-hand_domain"/>
</dbReference>
<dbReference type="InterPro" id="IPR020860">
    <property type="entry name" value="MIRO_dom"/>
</dbReference>
<dbReference type="InterPro" id="IPR027417">
    <property type="entry name" value="P-loop_NTPase"/>
</dbReference>
<dbReference type="InterPro" id="IPR005225">
    <property type="entry name" value="Small_GTP-bd"/>
</dbReference>
<dbReference type="InterPro" id="IPR001806">
    <property type="entry name" value="Small_GTPase"/>
</dbReference>
<dbReference type="NCBIfam" id="TIGR00231">
    <property type="entry name" value="small_GTP"/>
    <property type="match status" value="1"/>
</dbReference>
<dbReference type="PANTHER" id="PTHR46819">
    <property type="entry name" value="EF-HAND CALCIUM-BINDING DOMAIN-CONTAINING PROTEIN 7"/>
    <property type="match status" value="1"/>
</dbReference>
<dbReference type="PANTHER" id="PTHR46819:SF1">
    <property type="entry name" value="EF-HAND CALCIUM-BINDING DOMAIN-CONTAINING PROTEIN 7"/>
    <property type="match status" value="1"/>
</dbReference>
<dbReference type="Pfam" id="PF08355">
    <property type="entry name" value="EF_assoc_1"/>
    <property type="match status" value="1"/>
</dbReference>
<dbReference type="Pfam" id="PF08356">
    <property type="entry name" value="EF_assoc_2"/>
    <property type="match status" value="1"/>
</dbReference>
<dbReference type="Pfam" id="PF00071">
    <property type="entry name" value="Ras"/>
    <property type="match status" value="1"/>
</dbReference>
<dbReference type="PIRSF" id="PIRSF037488">
    <property type="entry name" value="Mt_Rho_GTPase"/>
    <property type="match status" value="1"/>
</dbReference>
<dbReference type="PRINTS" id="PR00449">
    <property type="entry name" value="RASTRNSFRMNG"/>
</dbReference>
<dbReference type="SMART" id="SM00054">
    <property type="entry name" value="EFh"/>
    <property type="match status" value="2"/>
</dbReference>
<dbReference type="SMART" id="SM00175">
    <property type="entry name" value="RAB"/>
    <property type="match status" value="1"/>
</dbReference>
<dbReference type="SMART" id="SM00173">
    <property type="entry name" value="RAS"/>
    <property type="match status" value="1"/>
</dbReference>
<dbReference type="SMART" id="SM00174">
    <property type="entry name" value="RHO"/>
    <property type="match status" value="1"/>
</dbReference>
<dbReference type="SUPFAM" id="SSF47473">
    <property type="entry name" value="EF-hand"/>
    <property type="match status" value="1"/>
</dbReference>
<dbReference type="SUPFAM" id="SSF52540">
    <property type="entry name" value="P-loop containing nucleoside triphosphate hydrolases"/>
    <property type="match status" value="2"/>
</dbReference>
<dbReference type="PROSITE" id="PS00018">
    <property type="entry name" value="EF_HAND_1"/>
    <property type="match status" value="1"/>
</dbReference>
<dbReference type="PROSITE" id="PS50222">
    <property type="entry name" value="EF_HAND_2"/>
    <property type="match status" value="2"/>
</dbReference>
<dbReference type="PROSITE" id="PS51423">
    <property type="entry name" value="MIRO"/>
    <property type="match status" value="2"/>
</dbReference>
<feature type="chain" id="PRO_0000239313" description="Mitochondrial Rho GTPase 1">
    <location>
        <begin position="1"/>
        <end position="618"/>
    </location>
</feature>
<feature type="topological domain" description="Cytoplasmic" evidence="3">
    <location>
        <begin position="1"/>
        <end position="592"/>
    </location>
</feature>
<feature type="transmembrane region" description="Helical; Anchor for type IV membrane protein" evidence="3">
    <location>
        <begin position="593"/>
        <end position="615"/>
    </location>
</feature>
<feature type="topological domain" description="Mitochondrial intermembrane" evidence="3">
    <location>
        <begin position="616"/>
        <end position="618"/>
    </location>
</feature>
<feature type="domain" description="Miro 1" evidence="5">
    <location>
        <begin position="2"/>
        <end position="168"/>
    </location>
</feature>
<feature type="domain" description="EF-hand 1" evidence="4">
    <location>
        <begin position="184"/>
        <end position="219"/>
    </location>
</feature>
<feature type="domain" description="EF-hand 2" evidence="4">
    <location>
        <begin position="304"/>
        <end position="339"/>
    </location>
</feature>
<feature type="domain" description="Miro 2" evidence="5">
    <location>
        <begin position="416"/>
        <end position="579"/>
    </location>
</feature>
<feature type="binding site" evidence="16 31">
    <location>
        <position position="14"/>
    </location>
    <ligand>
        <name>GTP</name>
        <dbReference type="ChEBI" id="CHEBI:37565"/>
        <label>1</label>
    </ligand>
</feature>
<feature type="binding site" evidence="16 31">
    <location>
        <position position="16"/>
    </location>
    <ligand>
        <name>GTP</name>
        <dbReference type="ChEBI" id="CHEBI:37565"/>
        <label>1</label>
    </ligand>
</feature>
<feature type="binding site" evidence="16 31">
    <location>
        <position position="17"/>
    </location>
    <ligand>
        <name>GTP</name>
        <dbReference type="ChEBI" id="CHEBI:37565"/>
        <label>1</label>
    </ligand>
</feature>
<feature type="binding site" evidence="16 31">
    <location>
        <position position="18"/>
    </location>
    <ligand>
        <name>GTP</name>
        <dbReference type="ChEBI" id="CHEBI:37565"/>
        <label>1</label>
    </ligand>
</feature>
<feature type="binding site" evidence="16 31">
    <location>
        <position position="18"/>
    </location>
    <ligand>
        <name>Mg(2+)</name>
        <dbReference type="ChEBI" id="CHEBI:18420"/>
        <label>1</label>
    </ligand>
</feature>
<feature type="binding site" evidence="16 31">
    <location>
        <position position="19"/>
    </location>
    <ligand>
        <name>GTP</name>
        <dbReference type="ChEBI" id="CHEBI:37565"/>
        <label>1</label>
    </ligand>
</feature>
<feature type="binding site" evidence="16 31">
    <location>
        <position position="35"/>
    </location>
    <ligand>
        <name>Mg(2+)</name>
        <dbReference type="ChEBI" id="CHEBI:18420"/>
        <label>1</label>
    </ligand>
</feature>
<feature type="binding site" evidence="16 31">
    <location>
        <position position="57"/>
    </location>
    <ligand>
        <name>Mg(2+)</name>
        <dbReference type="ChEBI" id="CHEBI:18420"/>
        <label>1</label>
    </ligand>
</feature>
<feature type="binding site" evidence="16 31">
    <location>
        <position position="59"/>
    </location>
    <ligand>
        <name>GTP</name>
        <dbReference type="ChEBI" id="CHEBI:37565"/>
        <label>1</label>
    </ligand>
</feature>
<feature type="binding site" evidence="16 31">
    <location>
        <position position="118"/>
    </location>
    <ligand>
        <name>GTP</name>
        <dbReference type="ChEBI" id="CHEBI:37565"/>
        <label>1</label>
    </ligand>
</feature>
<feature type="binding site" evidence="16 31">
    <location>
        <position position="119"/>
    </location>
    <ligand>
        <name>GTP</name>
        <dbReference type="ChEBI" id="CHEBI:37565"/>
        <label>1</label>
    </ligand>
</feature>
<feature type="binding site" evidence="16 31">
    <location>
        <position position="121"/>
    </location>
    <ligand>
        <name>GTP</name>
        <dbReference type="ChEBI" id="CHEBI:37565"/>
        <label>1</label>
    </ligand>
</feature>
<feature type="binding site" evidence="16 31">
    <location>
        <position position="149"/>
    </location>
    <ligand>
        <name>GTP</name>
        <dbReference type="ChEBI" id="CHEBI:37565"/>
        <label>1</label>
    </ligand>
</feature>
<feature type="binding site" evidence="16 31">
    <location>
        <position position="150"/>
    </location>
    <ligand>
        <name>GTP</name>
        <dbReference type="ChEBI" id="CHEBI:37565"/>
        <label>1</label>
    </ligand>
</feature>
<feature type="binding site" evidence="13 29">
    <location>
        <position position="197"/>
    </location>
    <ligand>
        <name>Ca(2+)</name>
        <dbReference type="ChEBI" id="CHEBI:29108"/>
        <label>1</label>
    </ligand>
</feature>
<feature type="binding site" evidence="13 29">
    <location>
        <position position="199"/>
    </location>
    <ligand>
        <name>Ca(2+)</name>
        <dbReference type="ChEBI" id="CHEBI:29108"/>
        <label>1</label>
    </ligand>
</feature>
<feature type="binding site" evidence="13 29">
    <location>
        <position position="201"/>
    </location>
    <ligand>
        <name>Ca(2+)</name>
        <dbReference type="ChEBI" id="CHEBI:29108"/>
        <label>1</label>
    </ligand>
</feature>
<feature type="binding site" evidence="13 29">
    <location>
        <position position="203"/>
    </location>
    <ligand>
        <name>Ca(2+)</name>
        <dbReference type="ChEBI" id="CHEBI:29108"/>
        <label>1</label>
    </ligand>
</feature>
<feature type="binding site" evidence="13 29">
    <location>
        <position position="208"/>
    </location>
    <ligand>
        <name>Ca(2+)</name>
        <dbReference type="ChEBI" id="CHEBI:29108"/>
        <label>1</label>
    </ligand>
</feature>
<feature type="binding site" evidence="13 29">
    <location>
        <position position="317"/>
    </location>
    <ligand>
        <name>Ca(2+)</name>
        <dbReference type="ChEBI" id="CHEBI:29108"/>
        <label>2</label>
    </ligand>
</feature>
<feature type="binding site" evidence="13 29">
    <location>
        <position position="319"/>
    </location>
    <ligand>
        <name>Ca(2+)</name>
        <dbReference type="ChEBI" id="CHEBI:29108"/>
        <label>2</label>
    </ligand>
</feature>
<feature type="binding site" evidence="13 29">
    <location>
        <position position="321"/>
    </location>
    <ligand>
        <name>Ca(2+)</name>
        <dbReference type="ChEBI" id="CHEBI:29108"/>
        <label>2</label>
    </ligand>
</feature>
<feature type="binding site" evidence="13 29">
    <location>
        <position position="323"/>
    </location>
    <ligand>
        <name>Ca(2+)</name>
        <dbReference type="ChEBI" id="CHEBI:29108"/>
        <label>2</label>
    </ligand>
</feature>
<feature type="binding site" evidence="13 29">
    <location>
        <position position="328"/>
    </location>
    <ligand>
        <name>Ca(2+)</name>
        <dbReference type="ChEBI" id="CHEBI:29108"/>
        <label>2</label>
    </ligand>
</feature>
<feature type="binding site" evidence="13 25 26 27 29 30">
    <location>
        <position position="428"/>
    </location>
    <ligand>
        <name>GDP</name>
        <dbReference type="ChEBI" id="CHEBI:58189"/>
    </ligand>
</feature>
<feature type="binding site" evidence="23 25 26 27 29 30">
    <location>
        <position position="428"/>
    </location>
    <ligand>
        <name>GTP</name>
        <dbReference type="ChEBI" id="CHEBI:37565"/>
        <label>2</label>
    </ligand>
</feature>
<feature type="binding site" evidence="13 29">
    <location>
        <position position="428"/>
    </location>
    <ligand>
        <name>Mg(2+)</name>
        <dbReference type="ChEBI" id="CHEBI:18420"/>
        <label>2</label>
    </ligand>
</feature>
<feature type="binding site" evidence="13 25 26 27 29 30">
    <location>
        <position position="429"/>
    </location>
    <ligand>
        <name>GDP</name>
        <dbReference type="ChEBI" id="CHEBI:58189"/>
    </ligand>
</feature>
<feature type="binding site" evidence="23 25 26 27 29 30">
    <location>
        <position position="429"/>
    </location>
    <ligand>
        <name>GTP</name>
        <dbReference type="ChEBI" id="CHEBI:37565"/>
        <label>2</label>
    </ligand>
</feature>
<feature type="binding site" evidence="13 25 26 27 29 30">
    <location>
        <position position="430"/>
    </location>
    <ligand>
        <name>GDP</name>
        <dbReference type="ChEBI" id="CHEBI:58189"/>
    </ligand>
</feature>
<feature type="binding site" evidence="23 25 26 27 29 30">
    <location>
        <position position="430"/>
    </location>
    <ligand>
        <name>GTP</name>
        <dbReference type="ChEBI" id="CHEBI:37565"/>
        <label>2</label>
    </ligand>
</feature>
<feature type="binding site" evidence="13 25 26 27 29 30">
    <location>
        <position position="431"/>
    </location>
    <ligand>
        <name>GDP</name>
        <dbReference type="ChEBI" id="CHEBI:58189"/>
    </ligand>
</feature>
<feature type="binding site" evidence="23 25 26 27 29 30">
    <location>
        <position position="431"/>
    </location>
    <ligand>
        <name>GTP</name>
        <dbReference type="ChEBI" id="CHEBI:37565"/>
        <label>2</label>
    </ligand>
</feature>
<feature type="binding site" evidence="13 25 26 27 29 30">
    <location>
        <position position="432"/>
    </location>
    <ligand>
        <name>GDP</name>
        <dbReference type="ChEBI" id="CHEBI:58189"/>
    </ligand>
</feature>
<feature type="binding site" evidence="23 25 26 27 29 30">
    <location>
        <position position="432"/>
    </location>
    <ligand>
        <name>GTP</name>
        <dbReference type="ChEBI" id="CHEBI:37565"/>
        <label>2</label>
    </ligand>
</feature>
<feature type="binding site" evidence="13 25 26 27 29 30">
    <location>
        <position position="433"/>
    </location>
    <ligand>
        <name>GDP</name>
        <dbReference type="ChEBI" id="CHEBI:58189"/>
    </ligand>
</feature>
<feature type="binding site" evidence="23 25 26 27 29 30">
    <location>
        <position position="433"/>
    </location>
    <ligand>
        <name>GTP</name>
        <dbReference type="ChEBI" id="CHEBI:37565"/>
        <label>2</label>
    </ligand>
</feature>
<feature type="binding site" evidence="13 25 26 27 29 30">
    <location>
        <position position="447"/>
    </location>
    <ligand>
        <name>GDP</name>
        <dbReference type="ChEBI" id="CHEBI:58189"/>
    </ligand>
</feature>
<feature type="binding site" evidence="23 26 29">
    <location>
        <position position="447"/>
    </location>
    <ligand>
        <name>GTP</name>
        <dbReference type="ChEBI" id="CHEBI:37565"/>
        <label>2</label>
    </ligand>
</feature>
<feature type="binding site" evidence="13 29">
    <location>
        <position position="454"/>
    </location>
    <ligand>
        <name>GDP</name>
        <dbReference type="ChEBI" id="CHEBI:58189"/>
    </ligand>
</feature>
<feature type="binding site" evidence="13 29">
    <location>
        <position position="477"/>
    </location>
    <ligand>
        <name>GDP</name>
        <dbReference type="ChEBI" id="CHEBI:58189"/>
    </ligand>
</feature>
<feature type="binding site" evidence="13 29">
    <location>
        <position position="478"/>
    </location>
    <ligand>
        <name>GDP</name>
        <dbReference type="ChEBI" id="CHEBI:58189"/>
    </ligand>
</feature>
<feature type="binding site" evidence="13 25 26 27 29 30">
    <location>
        <position position="528"/>
    </location>
    <ligand>
        <name>GDP</name>
        <dbReference type="ChEBI" id="CHEBI:58189"/>
    </ligand>
</feature>
<feature type="binding site" evidence="23 25 26 27 29 30">
    <location>
        <position position="528"/>
    </location>
    <ligand>
        <name>GTP</name>
        <dbReference type="ChEBI" id="CHEBI:37565"/>
        <label>2</label>
    </ligand>
</feature>
<feature type="binding site" evidence="13 25 26 27 29 30">
    <location>
        <position position="530"/>
    </location>
    <ligand>
        <name>GDP</name>
        <dbReference type="ChEBI" id="CHEBI:58189"/>
    </ligand>
</feature>
<feature type="binding site" evidence="23 25 26 27 29 30">
    <location>
        <position position="530"/>
    </location>
    <ligand>
        <name>GTP</name>
        <dbReference type="ChEBI" id="CHEBI:37565"/>
        <label>2</label>
    </ligand>
</feature>
<feature type="binding site" evidence="13 25 26 27 29 30">
    <location>
        <position position="558"/>
    </location>
    <ligand>
        <name>GDP</name>
        <dbReference type="ChEBI" id="CHEBI:58189"/>
    </ligand>
</feature>
<feature type="binding site" evidence="23 25 27 29">
    <location>
        <position position="558"/>
    </location>
    <ligand>
        <name>GTP</name>
        <dbReference type="ChEBI" id="CHEBI:37565"/>
        <label>2</label>
    </ligand>
</feature>
<feature type="binding site" evidence="13 25 26 27 29 30">
    <location>
        <position position="559"/>
    </location>
    <ligand>
        <name>GDP</name>
        <dbReference type="ChEBI" id="CHEBI:58189"/>
    </ligand>
</feature>
<feature type="binding site" evidence="23 25 26 27 29 30">
    <location>
        <position position="559"/>
    </location>
    <ligand>
        <name>GTP</name>
        <dbReference type="ChEBI" id="CHEBI:37565"/>
        <label>2</label>
    </ligand>
</feature>
<feature type="binding site" evidence="13 29">
    <location>
        <position position="560"/>
    </location>
    <ligand>
        <name>GDP</name>
        <dbReference type="ChEBI" id="CHEBI:58189"/>
    </ligand>
</feature>
<feature type="modified residue" description="N6-acetyllysine" evidence="1">
    <location>
        <position position="92"/>
    </location>
</feature>
<feature type="cross-link" description="Glycyl lysine isopeptide (Lys-Gly) (interchain with G-Cter in ubiquitin)" evidence="13">
    <location>
        <position position="153"/>
    </location>
</feature>
<feature type="cross-link" description="Glycyl lysine isopeptide (Lys-Gly) (interchain with G-Cter in ubiquitin)" evidence="13">
    <location>
        <position position="235"/>
    </location>
</feature>
<feature type="cross-link" description="Glycyl lysine isopeptide (Lys-Gly) (interchain with G-Cter in ubiquitin)" evidence="13">
    <location>
        <position position="572"/>
    </location>
</feature>
<feature type="splice variant" id="VSP_019153" description="In isoform 6." evidence="20">
    <original>QALEDVKNVVRKHISDGVADSGLT</original>
    <variation>RFGFEQVLVLLFLQFWALLCTKHY</variation>
    <location>
        <begin position="224"/>
        <end position="247"/>
    </location>
</feature>
<feature type="splice variant" id="VSP_019154" description="In isoform 6." evidence="20">
    <location>
        <begin position="248"/>
        <end position="618"/>
    </location>
</feature>
<feature type="splice variant" id="VSP_019155" description="In isoform 2." evidence="19 20">
    <original>P</original>
    <variation>PEDHYRDRLSRDMGHTDRIENLRKIWVFLKTAL</variation>
    <location>
        <position position="580"/>
    </location>
</feature>
<feature type="splice variant" id="VSP_019156" description="In isoform 3." evidence="18 19 21">
    <original>P</original>
    <variation>PEDHYRDRLSRDMGHTDRIENLRKIWVFLKTAFHARLRCMCTCNRCTFCICQNFLNSDLLQSVKNKIFTAVLNR</variation>
    <location>
        <position position="580"/>
    </location>
</feature>
<feature type="splice variant" id="VSP_047651" description="In isoform 7." evidence="22">
    <original>P</original>
    <variation>PHARLRCMCTCNRCTFCICQNFLNSDLLQSVKNKIFTAVLNR</variation>
    <location>
        <position position="580"/>
    </location>
</feature>
<feature type="splice variant" id="VSP_019157" description="In isoform 4." evidence="17">
    <location>
        <begin position="581"/>
        <end position="618"/>
    </location>
</feature>
<feature type="splice variant" id="VSP_019158" description="In isoform 5." evidence="20">
    <original>VTQADLKSSTFWLRASFGATVFAVLGFAMYKALLKQR</original>
    <variation>ARLRCMCTCNRCTFCICQNFLNSDLLQSVKNKIFTAVLNRIISA</variation>
    <location>
        <begin position="582"/>
        <end position="618"/>
    </location>
</feature>
<feature type="mutagenesis site" description="Causes constitutive activation inducing an aggregation of the mitochondrial network." evidence="6 7 8">
    <original>P</original>
    <variation>V</variation>
    <location>
        <position position="13"/>
    </location>
</feature>
<feature type="mutagenesis site" description="Causes constitutive inactivation." evidence="6 8">
    <original>T</original>
    <variation>N</variation>
    <location>
        <position position="18"/>
    </location>
</feature>
<feature type="mutagenesis site" description="No effect on PINK1-PRKN-mediated degradation." evidence="10">
    <original>S</original>
    <variation>A</variation>
    <location>
        <position position="156"/>
    </location>
</feature>
<feature type="mutagenesis site" description="Abolishes the formation of thread-like mitochondria." evidence="8">
    <original>E</original>
    <variation>K</variation>
    <location>
        <position position="208"/>
    </location>
</feature>
<feature type="mutagenesis site" description="Abolishes the formation of thread-like mitochondria." evidence="8">
    <original>E</original>
    <variation>K</variation>
    <location>
        <position position="328"/>
    </location>
</feature>
<feature type="mutagenesis site" description="No effect." evidence="8">
    <original>K</original>
    <variation>V</variation>
    <location>
        <position position="427"/>
    </location>
</feature>
<feature type="mutagenesis site" description="No effect." evidence="8">
    <original>S</original>
    <variation>N</variation>
    <location>
        <position position="432"/>
    </location>
</feature>
<feature type="sequence conflict" description="In Ref. 3; AAM15734." evidence="22" ref="3">
    <original>A</original>
    <variation>V</variation>
    <location>
        <position position="75"/>
    </location>
</feature>
<feature type="sequence conflict" description="In Ref. 7; AAH60781 and 5; BAA91969." evidence="22" ref="7 5">
    <original>L</original>
    <variation>F</variation>
    <location>
        <position position="246"/>
    </location>
</feature>
<feature type="sequence conflict" description="In Ref. 7; AAH60781." evidence="22" ref="7">
    <original>D</original>
    <variation>G</variation>
    <location>
        <position position="331"/>
    </location>
</feature>
<feature type="sequence conflict" description="In Ref. 2; CAD56956." evidence="22" ref="2">
    <original>L</original>
    <variation>P</variation>
    <location>
        <position position="587"/>
    </location>
</feature>
<feature type="strand" evidence="35">
    <location>
        <begin position="5"/>
        <end position="12"/>
    </location>
</feature>
<feature type="helix" evidence="35">
    <location>
        <begin position="17"/>
        <end position="26"/>
    </location>
</feature>
<feature type="strand" evidence="35">
    <location>
        <begin position="40"/>
        <end position="42"/>
    </location>
</feature>
<feature type="helix" evidence="35">
    <location>
        <begin position="44"/>
        <end position="46"/>
    </location>
</feature>
<feature type="strand" evidence="35">
    <location>
        <begin position="53"/>
        <end position="57"/>
    </location>
</feature>
<feature type="turn" evidence="35">
    <location>
        <begin position="60"/>
        <end position="62"/>
    </location>
</feature>
<feature type="helix" evidence="35">
    <location>
        <begin position="65"/>
        <end position="74"/>
    </location>
</feature>
<feature type="strand" evidence="35">
    <location>
        <begin position="76"/>
        <end position="83"/>
    </location>
</feature>
<feature type="helix" evidence="35">
    <location>
        <begin position="87"/>
        <end position="95"/>
    </location>
</feature>
<feature type="helix" evidence="35">
    <location>
        <begin position="97"/>
        <end position="101"/>
    </location>
</feature>
<feature type="strand" evidence="35">
    <location>
        <begin position="113"/>
        <end position="118"/>
    </location>
</feature>
<feature type="helix" evidence="35">
    <location>
        <begin position="120"/>
        <end position="122"/>
    </location>
</feature>
<feature type="helix" evidence="35">
    <location>
        <begin position="128"/>
        <end position="137"/>
    </location>
</feature>
<feature type="strand" evidence="35">
    <location>
        <begin position="141"/>
        <end position="146"/>
    </location>
</feature>
<feature type="turn" evidence="35">
    <location>
        <begin position="149"/>
        <end position="152"/>
    </location>
</feature>
<feature type="helix" evidence="35">
    <location>
        <begin position="155"/>
        <end position="167"/>
    </location>
</feature>
<feature type="helix" evidence="33">
    <location>
        <begin position="183"/>
        <end position="196"/>
    </location>
</feature>
<feature type="strand" evidence="33">
    <location>
        <begin position="201"/>
        <end position="204"/>
    </location>
</feature>
<feature type="helix" evidence="33">
    <location>
        <begin position="206"/>
        <end position="217"/>
    </location>
</feature>
<feature type="helix" evidence="33">
    <location>
        <begin position="225"/>
        <end position="234"/>
    </location>
</feature>
<feature type="strand" evidence="33">
    <location>
        <begin position="238"/>
        <end position="242"/>
    </location>
</feature>
<feature type="strand" evidence="33">
    <location>
        <begin position="245"/>
        <end position="247"/>
    </location>
</feature>
<feature type="helix" evidence="33">
    <location>
        <begin position="248"/>
        <end position="259"/>
    </location>
</feature>
<feature type="strand" evidence="34">
    <location>
        <begin position="260"/>
        <end position="262"/>
    </location>
</feature>
<feature type="helix" evidence="33">
    <location>
        <begin position="266"/>
        <end position="273"/>
    </location>
</feature>
<feature type="strand" evidence="33">
    <location>
        <begin position="280"/>
        <end position="282"/>
    </location>
</feature>
<feature type="helix" evidence="33">
    <location>
        <begin position="284"/>
        <end position="287"/>
    </location>
</feature>
<feature type="strand" evidence="33">
    <location>
        <begin position="299"/>
        <end position="301"/>
    </location>
</feature>
<feature type="helix" evidence="33">
    <location>
        <begin position="303"/>
        <end position="316"/>
    </location>
</feature>
<feature type="strand" evidence="33">
    <location>
        <begin position="321"/>
        <end position="324"/>
    </location>
</feature>
<feature type="helix" evidence="33">
    <location>
        <begin position="326"/>
        <end position="332"/>
    </location>
</feature>
<feature type="helix" evidence="33">
    <location>
        <begin position="333"/>
        <end position="335"/>
    </location>
</feature>
<feature type="strand" evidence="33">
    <location>
        <begin position="336"/>
        <end position="338"/>
    </location>
</feature>
<feature type="helix" evidence="33">
    <location>
        <begin position="345"/>
        <end position="347"/>
    </location>
</feature>
<feature type="helix" evidence="33">
    <location>
        <begin position="359"/>
        <end position="372"/>
    </location>
</feature>
<feature type="helix" evidence="33">
    <location>
        <begin position="374"/>
        <end position="383"/>
    </location>
</feature>
<feature type="helix" evidence="33">
    <location>
        <begin position="386"/>
        <end position="389"/>
    </location>
</feature>
<feature type="helix" evidence="33">
    <location>
        <begin position="395"/>
        <end position="398"/>
    </location>
</feature>
<feature type="strand" evidence="33">
    <location>
        <begin position="399"/>
        <end position="401"/>
    </location>
</feature>
<feature type="helix" evidence="33">
    <location>
        <begin position="405"/>
        <end position="410"/>
    </location>
</feature>
<feature type="strand" evidence="32">
    <location>
        <begin position="418"/>
        <end position="424"/>
    </location>
</feature>
<feature type="helix" evidence="32">
    <location>
        <begin position="431"/>
        <end position="438"/>
    </location>
</feature>
<feature type="helix" evidence="32">
    <location>
        <begin position="443"/>
        <end position="446"/>
    </location>
</feature>
<feature type="helix" evidence="33">
    <location>
        <begin position="451"/>
        <end position="453"/>
    </location>
</feature>
<feature type="strand" evidence="32">
    <location>
        <begin position="457"/>
        <end position="464"/>
    </location>
</feature>
<feature type="strand" evidence="32">
    <location>
        <begin position="467"/>
        <end position="476"/>
    </location>
</feature>
<feature type="helix" evidence="32">
    <location>
        <begin position="484"/>
        <end position="487"/>
    </location>
</feature>
<feature type="strand" evidence="32">
    <location>
        <begin position="490"/>
        <end position="497"/>
    </location>
</feature>
<feature type="turn" evidence="34">
    <location>
        <begin position="501"/>
        <end position="503"/>
    </location>
</feature>
<feature type="helix" evidence="32">
    <location>
        <begin position="504"/>
        <end position="514"/>
    </location>
</feature>
<feature type="turn" evidence="32">
    <location>
        <begin position="515"/>
        <end position="517"/>
    </location>
</feature>
<feature type="strand" evidence="33">
    <location>
        <begin position="518"/>
        <end position="520"/>
    </location>
</feature>
<feature type="strand" evidence="32">
    <location>
        <begin position="522"/>
        <end position="527"/>
    </location>
</feature>
<feature type="strand" evidence="32">
    <location>
        <begin position="537"/>
        <end position="540"/>
    </location>
</feature>
<feature type="helix" evidence="32">
    <location>
        <begin position="542"/>
        <end position="548"/>
    </location>
</feature>
<feature type="strand" evidence="32">
    <location>
        <begin position="562"/>
        <end position="564"/>
    </location>
</feature>
<feature type="helix" evidence="32">
    <location>
        <begin position="568"/>
        <end position="577"/>
    </location>
</feature>
<sequence length="618" mass="70784">MKKDVRILLVGEPRVGKTSLIMSLVSEEFPEEVPPRAEEITIPADVTPERVPTHIVDYSEAEQSDEQLHQEISQANVICIVYAVNNKHSIDKVTSRWIPLINERTDKDSRLPLILVGNKSDLVEYSSMETILPIMNQYTEIETCVECSAKNLKNISELFYYAQKAVLHPTGPLYCPEEKEMKPACIKALTRIFKISDQDNDGTLNDAELNFFQRICFNTPLAPQALEDVKNVVRKHISDGVADSGLTLKGFLFLHTLFIQRGRHETTWTVLRRFGYDDDLDLTPEYLFPLLKIPPDCTTELNHHAYLFLQSTFDKHDLDRDCALSPDELKDLFKVFPYIPWGPDVNNTVCTNERGWITYQGFLSQWTLTTYLDVQRCLEYLGYLGYSILTEQESQASAVTVTRDKKIDLQKKQTQRNVFRCNVIGVKNCGKSGVLQALLGRNLMRQKKIREDHKSYYAINTVYVYGQEKYLLLHDISESEFLTEAEIICDVVCLVYDVSNPKSFEYCARIFKQHFMDSRIPCLIVAAKSDLHEVKQEYSISPTDFCRKHKMPPPQAFTCNTADAPSKDIFVKLTTMAMYPHVTQADLKSSTFWLRASFGATVFAVLGFAMYKALLKQR</sequence>
<comment type="function">
    <text evidence="6 8 10 14 15">Atypical mitochondrial nucleoside-triphosphatase (NTPase) involved in mitochondrial trafficking (PubMed:12482879, PubMed:16630562, PubMed:22396657, PubMed:30513825). Probably involved in control of anterograde transport of mitochondria and their subcellular distribution (PubMed:12482879, PubMed:16630562, PubMed:22396657). Promotes mitochondrial fission during high calcium conditions (PubMed:27716788). Can hydrolyze GTP, ATP and UTP (PubMed:30513825).</text>
</comment>
<comment type="catalytic activity">
    <reaction evidence="15">
        <text>GTP + H2O = GDP + phosphate + H(+)</text>
        <dbReference type="Rhea" id="RHEA:19669"/>
        <dbReference type="ChEBI" id="CHEBI:15377"/>
        <dbReference type="ChEBI" id="CHEBI:15378"/>
        <dbReference type="ChEBI" id="CHEBI:37565"/>
        <dbReference type="ChEBI" id="CHEBI:43474"/>
        <dbReference type="ChEBI" id="CHEBI:58189"/>
    </reaction>
    <physiologicalReaction direction="left-to-right" evidence="24">
        <dbReference type="Rhea" id="RHEA:19670"/>
    </physiologicalReaction>
</comment>
<comment type="catalytic activity">
    <reaction evidence="15">
        <text>ATP + H2O = ADP + phosphate + H(+)</text>
        <dbReference type="Rhea" id="RHEA:13065"/>
        <dbReference type="ChEBI" id="CHEBI:15377"/>
        <dbReference type="ChEBI" id="CHEBI:15378"/>
        <dbReference type="ChEBI" id="CHEBI:30616"/>
        <dbReference type="ChEBI" id="CHEBI:43474"/>
        <dbReference type="ChEBI" id="CHEBI:456216"/>
    </reaction>
    <physiologicalReaction direction="left-to-right" evidence="24">
        <dbReference type="Rhea" id="RHEA:13066"/>
    </physiologicalReaction>
</comment>
<comment type="catalytic activity">
    <reaction evidence="15">
        <text>UTP + H2O = UDP + phosphate + H(+)</text>
        <dbReference type="Rhea" id="RHEA:64900"/>
        <dbReference type="ChEBI" id="CHEBI:15377"/>
        <dbReference type="ChEBI" id="CHEBI:15378"/>
        <dbReference type="ChEBI" id="CHEBI:43474"/>
        <dbReference type="ChEBI" id="CHEBI:46398"/>
        <dbReference type="ChEBI" id="CHEBI:58223"/>
    </reaction>
    <physiologicalReaction direction="left-to-right" evidence="24">
        <dbReference type="Rhea" id="RHEA:64901"/>
    </physiologicalReaction>
</comment>
<comment type="subunit">
    <text evidence="2 8 12 13 14 16">Homodimer (PubMed:27605430, PubMed:33132189). Interacts with the kinesin-binding proteins TRAK1/OIP106 and TRAK2/GRIF1, forming a link between mitochondria and the trafficking apparatus of the microtubules (PubMed:16630562). Interacts with RAP1GDS1 (PubMed:27716788). Interacts with ARMCX1 (By similarity). Found in a complex with KIF5B, OGT, RHOT2 and TRAK1 (PubMed:24995978).</text>
</comment>
<comment type="interaction">
    <interactant intactId="EBI-1396430">
        <id>Q8IXI2</id>
    </interactant>
    <interactant intactId="EBI-717170">
        <id>O60282</id>
        <label>KIF5C</label>
    </interactant>
    <organismsDiffer>false</organismsDiffer>
    <experiments>2</experiments>
</comment>
<comment type="interaction">
    <interactant intactId="EBI-1396430">
        <id>Q8IXI2</id>
    </interactant>
    <interactant intactId="EBI-2846068">
        <id>Q9BXM7</id>
        <label>PINK1</label>
    </interactant>
    <organismsDiffer>false</organismsDiffer>
    <experiments>3</experiments>
</comment>
<comment type="interaction">
    <interactant intactId="EBI-1396430">
        <id>Q8IXI2</id>
    </interactant>
    <interactant intactId="EBI-716346">
        <id>O60260</id>
        <label>PRKN</label>
    </interactant>
    <organismsDiffer>false</organismsDiffer>
    <experiments>3</experiments>
</comment>
<comment type="interaction">
    <interactant intactId="EBI-1396430">
        <id>Q8IXI2</id>
    </interactant>
    <interactant intactId="EBI-1105048">
        <id>Q9UPV9</id>
        <label>TRAK1</label>
    </interactant>
    <organismsDiffer>false</organismsDiffer>
    <experiments>7</experiments>
</comment>
<comment type="interaction">
    <interactant intactId="EBI-1396430">
        <id>Q8IXI2</id>
    </interactant>
    <interactant intactId="EBI-994504">
        <id>P56536</id>
        <label>Kif5c</label>
    </interactant>
    <organismsDiffer>true</organismsDiffer>
    <experiments>5</experiments>
</comment>
<comment type="subcellular location">
    <subcellularLocation>
        <location evidence="6 9">Mitochondrion outer membrane</location>
        <topology evidence="6 9">Single-pass type IV membrane protein</topology>
    </subcellularLocation>
    <text>Colocalizes with MGARP and RHOT2 at the mitochondria.</text>
</comment>
<comment type="alternative products">
    <event type="alternative splicing"/>
    <isoform>
        <id>Q8IXI2-1</id>
        <name>1</name>
        <sequence type="displayed"/>
    </isoform>
    <isoform>
        <id>Q8IXI2-2</id>
        <name>2</name>
        <sequence type="described" ref="VSP_019155"/>
    </isoform>
    <isoform>
        <id>Q8IXI2-3</id>
        <name>3</name>
        <sequence type="described" ref="VSP_019156"/>
    </isoform>
    <isoform>
        <id>Q8IXI2-4</id>
        <name>4</name>
        <sequence type="described" ref="VSP_019157"/>
    </isoform>
    <isoform>
        <id>Q8IXI2-5</id>
        <name>5</name>
        <sequence type="described" ref="VSP_019158"/>
    </isoform>
    <isoform>
        <id>Q8IXI2-6</id>
        <name>6</name>
        <sequence type="described" ref="VSP_019153 VSP_019154"/>
    </isoform>
    <isoform>
        <id>Q8IXI2-7</id>
        <name>7</name>
        <sequence type="described" ref="VSP_047651"/>
    </isoform>
</comment>
<comment type="tissue specificity">
    <text evidence="6">Ubiquitously expressed. Expressed at high level in heart and skeletal muscle.</text>
</comment>
<comment type="domain">
    <text evidence="13">The Miro 2 domain is necessary for efficient ubiquitination by PRKN.</text>
</comment>
<comment type="PTM">
    <text evidence="10 11 13">Ubiquitinated by PRKN during mitophagy, leading to its degradation and enhancement of mitophagy (PubMed:22396657, PubMed:24896179, PubMed:27605430). Deubiquitinated by USP30 (PubMed:24896179).</text>
</comment>
<comment type="PTM">
    <text evidence="1">Acetylation on Lys-92 decreases sensitivity of mitochondrial transport to elevated Ca(2+) levels, increases mitochondrial transport and promotes axon growth. Deacetylated by HDAC6 which blocks mitochondrial transport and mediates axon growth inhibition.</text>
</comment>
<comment type="similarity">
    <text evidence="5 22">Belongs to the mitochondrial Rho GTPase family.</text>
</comment>
<comment type="sequence caution" evidence="22">
    <conflict type="erroneous initiation">
        <sequence resource="EMBL-CDS" id="AAH41114"/>
    </conflict>
    <text>Extended N-terminus.</text>
</comment>
<comment type="sequence caution" evidence="22">
    <conflict type="erroneous initiation">
        <sequence resource="EMBL-CDS" id="AAH68463"/>
    </conflict>
    <text>Extended N-terminus.</text>
</comment>
<comment type="sequence caution" evidence="22">
    <conflict type="erroneous initiation">
        <sequence resource="EMBL-CDS" id="BAA91969"/>
    </conflict>
    <text>Truncated N-terminus.</text>
</comment>
<comment type="sequence caution" evidence="22">
    <conflict type="erroneous initiation">
        <sequence resource="EMBL-CDS" id="BAB14185"/>
    </conflict>
    <text>Truncated N-terminus.</text>
</comment>
<name>MIRO1_HUMAN</name>
<keyword id="KW-0002">3D-structure</keyword>
<keyword id="KW-0007">Acetylation</keyword>
<keyword id="KW-0025">Alternative splicing</keyword>
<keyword id="KW-0106">Calcium</keyword>
<keyword id="KW-0342">GTP-binding</keyword>
<keyword id="KW-0378">Hydrolase</keyword>
<keyword id="KW-1017">Isopeptide bond</keyword>
<keyword id="KW-0472">Membrane</keyword>
<keyword id="KW-0479">Metal-binding</keyword>
<keyword id="KW-0496">Mitochondrion</keyword>
<keyword id="KW-1000">Mitochondrion outer membrane</keyword>
<keyword id="KW-0547">Nucleotide-binding</keyword>
<keyword id="KW-1267">Proteomics identification</keyword>
<keyword id="KW-1185">Reference proteome</keyword>
<keyword id="KW-0677">Repeat</keyword>
<keyword id="KW-0812">Transmembrane</keyword>
<keyword id="KW-1133">Transmembrane helix</keyword>
<keyword id="KW-0832">Ubl conjugation</keyword>
<organism>
    <name type="scientific">Homo sapiens</name>
    <name type="common">Human</name>
    <dbReference type="NCBI Taxonomy" id="9606"/>
    <lineage>
        <taxon>Eukaryota</taxon>
        <taxon>Metazoa</taxon>
        <taxon>Chordata</taxon>
        <taxon>Craniata</taxon>
        <taxon>Vertebrata</taxon>
        <taxon>Euteleostomi</taxon>
        <taxon>Mammalia</taxon>
        <taxon>Eutheria</taxon>
        <taxon>Euarchontoglires</taxon>
        <taxon>Primates</taxon>
        <taxon>Haplorrhini</taxon>
        <taxon>Catarrhini</taxon>
        <taxon>Hominidae</taxon>
        <taxon>Homo</taxon>
    </lineage>
</organism>
<proteinExistence type="evidence at protein level"/>
<gene>
    <name type="primary">RHOT1</name>
    <name type="synonym">ARHT1</name>
</gene>
<protein>
    <recommendedName>
        <fullName>Mitochondrial Rho GTPase 1</fullName>
        <shortName>MIRO-1</shortName>
        <shortName>hMiro-1</shortName>
        <ecNumber evidence="15">3.6.5.-</ecNumber>
    </recommendedName>
    <alternativeName>
        <fullName>Rac-GTP-binding protein-like protein</fullName>
    </alternativeName>
    <alternativeName>
        <fullName>Ras homolog gene family member T1</fullName>
    </alternativeName>
</protein>
<reference key="1">
    <citation type="journal article" date="2003" name="Genes Chromosomes Cancer">
        <title>Complete physical map and gene content of the human NF1 tumor suppressor region in human and mouse.</title>
        <authorList>
            <person name="Jenne D.E."/>
            <person name="Tinschert S."/>
            <person name="Dorschner M.O."/>
            <person name="Hameister H."/>
            <person name="Stephens K."/>
            <person name="Kehrer-Sawatzki H."/>
        </authorList>
    </citation>
    <scope>NUCLEOTIDE SEQUENCE [MRNA] (ISOFORM 3)</scope>
</reference>
<reference key="2">
    <citation type="journal article" date="2003" name="J. Biol. Chem.">
        <title>Atypical Rho GTPases have roles in mitochondrial homeostasis and apoptosis.</title>
        <authorList>
            <person name="Fransson A."/>
            <person name="Ruusala A."/>
            <person name="Aspenstroem P."/>
        </authorList>
    </citation>
    <scope>NUCLEOTIDE SEQUENCE [MRNA] (ISOFORM 1)</scope>
    <scope>FUNCTION</scope>
    <scope>SUBCELLULAR LOCATION</scope>
    <scope>TISSUE SPECIFICITY</scope>
    <scope>MUTAGENESIS OF PRO-13 AND THR-18</scope>
</reference>
<reference key="3">
    <citation type="submission" date="2002-04" db="EMBL/GenBank/DDBJ databases">
        <title>Cloning a novel Rac-GTP binding protein-like gene from human fetal brain.</title>
        <authorList>
            <person name="Zeng L."/>
            <person name="Xie Y."/>
            <person name="Mao Y."/>
        </authorList>
    </citation>
    <scope>NUCLEOTIDE SEQUENCE [MRNA] (ISOFORM 3)</scope>
    <source>
        <tissue>Fetal brain</tissue>
    </source>
</reference>
<reference key="4">
    <citation type="journal article" date="2001" name="Genome Res.">
        <title>Towards a catalog of human genes and proteins: sequencing and analysis of 500 novel complete protein coding human cDNAs.</title>
        <authorList>
            <person name="Wiemann S."/>
            <person name="Weil B."/>
            <person name="Wellenreuther R."/>
            <person name="Gassenhuber J."/>
            <person name="Glassl S."/>
            <person name="Ansorge W."/>
            <person name="Boecher M."/>
            <person name="Bloecker H."/>
            <person name="Bauersachs S."/>
            <person name="Blum H."/>
            <person name="Lauber J."/>
            <person name="Duesterhoeft A."/>
            <person name="Beyer A."/>
            <person name="Koehrer K."/>
            <person name="Strack N."/>
            <person name="Mewes H.-W."/>
            <person name="Ottenwaelder B."/>
            <person name="Obermaier B."/>
            <person name="Tampe J."/>
            <person name="Heubner D."/>
            <person name="Wambutt R."/>
            <person name="Korn B."/>
            <person name="Klein M."/>
            <person name="Poustka A."/>
        </authorList>
    </citation>
    <scope>NUCLEOTIDE SEQUENCE [LARGE SCALE MRNA] (ISOFORM 4)</scope>
    <source>
        <tissue>Uterus</tissue>
    </source>
</reference>
<reference key="5">
    <citation type="journal article" date="2004" name="Nat. Genet.">
        <title>Complete sequencing and characterization of 21,243 full-length human cDNAs.</title>
        <authorList>
            <person name="Ota T."/>
            <person name="Suzuki Y."/>
            <person name="Nishikawa T."/>
            <person name="Otsuki T."/>
            <person name="Sugiyama T."/>
            <person name="Irie R."/>
            <person name="Wakamatsu A."/>
            <person name="Hayashi K."/>
            <person name="Sato H."/>
            <person name="Nagai K."/>
            <person name="Kimura K."/>
            <person name="Makita H."/>
            <person name="Sekine M."/>
            <person name="Obayashi M."/>
            <person name="Nishi T."/>
            <person name="Shibahara T."/>
            <person name="Tanaka T."/>
            <person name="Ishii S."/>
            <person name="Yamamoto J."/>
            <person name="Saito K."/>
            <person name="Kawai Y."/>
            <person name="Isono Y."/>
            <person name="Nakamura Y."/>
            <person name="Nagahari K."/>
            <person name="Murakami K."/>
            <person name="Yasuda T."/>
            <person name="Iwayanagi T."/>
            <person name="Wagatsuma M."/>
            <person name="Shiratori A."/>
            <person name="Sudo H."/>
            <person name="Hosoiri T."/>
            <person name="Kaku Y."/>
            <person name="Kodaira H."/>
            <person name="Kondo H."/>
            <person name="Sugawara M."/>
            <person name="Takahashi M."/>
            <person name="Kanda K."/>
            <person name="Yokoi T."/>
            <person name="Furuya T."/>
            <person name="Kikkawa E."/>
            <person name="Omura Y."/>
            <person name="Abe K."/>
            <person name="Kamihara K."/>
            <person name="Katsuta N."/>
            <person name="Sato K."/>
            <person name="Tanikawa M."/>
            <person name="Yamazaki M."/>
            <person name="Ninomiya K."/>
            <person name="Ishibashi T."/>
            <person name="Yamashita H."/>
            <person name="Murakawa K."/>
            <person name="Fujimori K."/>
            <person name="Tanai H."/>
            <person name="Kimata M."/>
            <person name="Watanabe M."/>
            <person name="Hiraoka S."/>
            <person name="Chiba Y."/>
            <person name="Ishida S."/>
            <person name="Ono Y."/>
            <person name="Takiguchi S."/>
            <person name="Watanabe S."/>
            <person name="Yosida M."/>
            <person name="Hotuta T."/>
            <person name="Kusano J."/>
            <person name="Kanehori K."/>
            <person name="Takahashi-Fujii A."/>
            <person name="Hara H."/>
            <person name="Tanase T.-O."/>
            <person name="Nomura Y."/>
            <person name="Togiya S."/>
            <person name="Komai F."/>
            <person name="Hara R."/>
            <person name="Takeuchi K."/>
            <person name="Arita M."/>
            <person name="Imose N."/>
            <person name="Musashino K."/>
            <person name="Yuuki H."/>
            <person name="Oshima A."/>
            <person name="Sasaki N."/>
            <person name="Aotsuka S."/>
            <person name="Yoshikawa Y."/>
            <person name="Matsunawa H."/>
            <person name="Ichihara T."/>
            <person name="Shiohata N."/>
            <person name="Sano S."/>
            <person name="Moriya S."/>
            <person name="Momiyama H."/>
            <person name="Satoh N."/>
            <person name="Takami S."/>
            <person name="Terashima Y."/>
            <person name="Suzuki O."/>
            <person name="Nakagawa S."/>
            <person name="Senoh A."/>
            <person name="Mizoguchi H."/>
            <person name="Goto Y."/>
            <person name="Shimizu F."/>
            <person name="Wakebe H."/>
            <person name="Hishigaki H."/>
            <person name="Watanabe T."/>
            <person name="Sugiyama A."/>
            <person name="Takemoto M."/>
            <person name="Kawakami B."/>
            <person name="Yamazaki M."/>
            <person name="Watanabe K."/>
            <person name="Kumagai A."/>
            <person name="Itakura S."/>
            <person name="Fukuzumi Y."/>
            <person name="Fujimori Y."/>
            <person name="Komiyama M."/>
            <person name="Tashiro H."/>
            <person name="Tanigami A."/>
            <person name="Fujiwara T."/>
            <person name="Ono T."/>
            <person name="Yamada K."/>
            <person name="Fujii Y."/>
            <person name="Ozaki K."/>
            <person name="Hirao M."/>
            <person name="Ohmori Y."/>
            <person name="Kawabata A."/>
            <person name="Hikiji T."/>
            <person name="Kobatake N."/>
            <person name="Inagaki H."/>
            <person name="Ikema Y."/>
            <person name="Okamoto S."/>
            <person name="Okitani R."/>
            <person name="Kawakami T."/>
            <person name="Noguchi S."/>
            <person name="Itoh T."/>
            <person name="Shigeta K."/>
            <person name="Senba T."/>
            <person name="Matsumura K."/>
            <person name="Nakajima Y."/>
            <person name="Mizuno T."/>
            <person name="Morinaga M."/>
            <person name="Sasaki M."/>
            <person name="Togashi T."/>
            <person name="Oyama M."/>
            <person name="Hata H."/>
            <person name="Watanabe M."/>
            <person name="Komatsu T."/>
            <person name="Mizushima-Sugano J."/>
            <person name="Satoh T."/>
            <person name="Shirai Y."/>
            <person name="Takahashi Y."/>
            <person name="Nakagawa K."/>
            <person name="Okumura K."/>
            <person name="Nagase T."/>
            <person name="Nomura N."/>
            <person name="Kikuchi H."/>
            <person name="Masuho Y."/>
            <person name="Yamashita R."/>
            <person name="Nakai K."/>
            <person name="Yada T."/>
            <person name="Nakamura Y."/>
            <person name="Ohara O."/>
            <person name="Isogai T."/>
            <person name="Sugano S."/>
        </authorList>
    </citation>
    <scope>NUCLEOTIDE SEQUENCE [LARGE SCALE MRNA] (ISOFORM 2)</scope>
    <scope>NUCLEOTIDE SEQUENCE [LARGE SCALE MRNA] OF 134-618 (ISOFORM 1)</scope>
    <scope>NUCLEOTIDE SEQUENCE [LARGE SCALE MRNA] OF 157-618 (ISOFORM 3)</scope>
    <source>
        <tissue>Amygdala</tissue>
        <tissue>Placenta</tissue>
        <tissue>Teratocarcinoma</tissue>
    </source>
</reference>
<reference key="6">
    <citation type="journal article" date="2006" name="Nature">
        <title>DNA sequence of human chromosome 17 and analysis of rearrangement in the human lineage.</title>
        <authorList>
            <person name="Zody M.C."/>
            <person name="Garber M."/>
            <person name="Adams D.J."/>
            <person name="Sharpe T."/>
            <person name="Harrow J."/>
            <person name="Lupski J.R."/>
            <person name="Nicholson C."/>
            <person name="Searle S.M."/>
            <person name="Wilming L."/>
            <person name="Young S.K."/>
            <person name="Abouelleil A."/>
            <person name="Allen N.R."/>
            <person name="Bi W."/>
            <person name="Bloom T."/>
            <person name="Borowsky M.L."/>
            <person name="Bugalter B.E."/>
            <person name="Butler J."/>
            <person name="Chang J.L."/>
            <person name="Chen C.-K."/>
            <person name="Cook A."/>
            <person name="Corum B."/>
            <person name="Cuomo C.A."/>
            <person name="de Jong P.J."/>
            <person name="DeCaprio D."/>
            <person name="Dewar K."/>
            <person name="FitzGerald M."/>
            <person name="Gilbert J."/>
            <person name="Gibson R."/>
            <person name="Gnerre S."/>
            <person name="Goldstein S."/>
            <person name="Grafham D.V."/>
            <person name="Grocock R."/>
            <person name="Hafez N."/>
            <person name="Hagopian D.S."/>
            <person name="Hart E."/>
            <person name="Norman C.H."/>
            <person name="Humphray S."/>
            <person name="Jaffe D.B."/>
            <person name="Jones M."/>
            <person name="Kamal M."/>
            <person name="Khodiyar V.K."/>
            <person name="LaButti K."/>
            <person name="Laird G."/>
            <person name="Lehoczky J."/>
            <person name="Liu X."/>
            <person name="Lokyitsang T."/>
            <person name="Loveland J."/>
            <person name="Lui A."/>
            <person name="Macdonald P."/>
            <person name="Major J.E."/>
            <person name="Matthews L."/>
            <person name="Mauceli E."/>
            <person name="McCarroll S.A."/>
            <person name="Mihalev A.H."/>
            <person name="Mudge J."/>
            <person name="Nguyen C."/>
            <person name="Nicol R."/>
            <person name="O'Leary S.B."/>
            <person name="Osoegawa K."/>
            <person name="Schwartz D.C."/>
            <person name="Shaw-Smith C."/>
            <person name="Stankiewicz P."/>
            <person name="Steward C."/>
            <person name="Swarbreck D."/>
            <person name="Venkataraman V."/>
            <person name="Whittaker C.A."/>
            <person name="Yang X."/>
            <person name="Zimmer A.R."/>
            <person name="Bradley A."/>
            <person name="Hubbard T."/>
            <person name="Birren B.W."/>
            <person name="Rogers J."/>
            <person name="Lander E.S."/>
            <person name="Nusbaum C."/>
        </authorList>
    </citation>
    <scope>NUCLEOTIDE SEQUENCE [LARGE SCALE GENOMIC DNA]</scope>
</reference>
<reference key="7">
    <citation type="journal article" date="2004" name="Genome Res.">
        <title>The status, quality, and expansion of the NIH full-length cDNA project: the Mammalian Gene Collection (MGC).</title>
        <authorList>
            <consortium name="The MGC Project Team"/>
        </authorList>
    </citation>
    <scope>NUCLEOTIDE SEQUENCE [LARGE SCALE MRNA] (ISOFORMS 1 AND 5)</scope>
    <scope>NUCLEOTIDE SEQUENCE [LARGE SCALE MRNA] OF 18-618 (ISOFORM 2)</scope>
    <scope>NUCLEOTIDE SEQUENCE [LARGE SCALE MRNA] OF 90-550 (ISOFORM 6)</scope>
    <source>
        <tissue>Brain</tissue>
        <tissue>Lung</tissue>
        <tissue>Testis</tissue>
        <tissue>Uterus</tissue>
    </source>
</reference>
<reference key="8">
    <citation type="journal article" date="2004" name="Biochem. J.">
        <title>Rho GTPases have diverse effects on the organization of the actin filament system.</title>
        <authorList>
            <person name="Aspenstroem P."/>
            <person name="Fransson A."/>
            <person name="Saras J."/>
        </authorList>
    </citation>
    <scope>MUTAGENESIS OF PRO-13</scope>
</reference>
<reference key="9">
    <citation type="journal article" date="2006" name="Biochem. Biophys. Res. Commun.">
        <title>The atypical Rho GTPases Miro-1 and Miro-2 have essential roles in mitochondrial trafficking.</title>
        <authorList>
            <person name="Fransson S."/>
            <person name="Ruusala A."/>
            <person name="Aspenstroem P."/>
        </authorList>
    </citation>
    <scope>FUNCTION</scope>
    <scope>INTERACTION WITH TRAK1 AND TRAK2</scope>
    <scope>MUTAGENESIS OF PRO-13; THR-18; GLU-208; GLU-328; LYS-427 AND SER-432</scope>
</reference>
<reference key="10">
    <citation type="journal article" date="2009" name="J. Cell Biol.">
        <title>HUMMR, a hypoxia- and HIF-1alpha-inducible protein, alters mitochondrial distribution and transport.</title>
        <authorList>
            <person name="Li Y."/>
            <person name="Lim S."/>
            <person name="Hoffman D."/>
            <person name="Aspenstrom P."/>
            <person name="Federoff H.J."/>
            <person name="Rempe D.A."/>
        </authorList>
    </citation>
    <scope>SUBCELLULAR LOCATION</scope>
</reference>
<reference key="11">
    <citation type="journal article" date="2011" name="BMC Syst. Biol.">
        <title>Initial characterization of the human central proteome.</title>
        <authorList>
            <person name="Burkard T.R."/>
            <person name="Planyavsky M."/>
            <person name="Kaupe I."/>
            <person name="Breitwieser F.P."/>
            <person name="Buerckstuemmer T."/>
            <person name="Bennett K.L."/>
            <person name="Superti-Furga G."/>
            <person name="Colinge J."/>
        </authorList>
    </citation>
    <scope>IDENTIFICATION BY MASS SPECTROMETRY [LARGE SCALE ANALYSIS]</scope>
</reference>
<reference key="12">
    <citation type="journal article" date="2012" name="PLoS Genet.">
        <title>Parkinson's disease-associated kinase PINK1 regulates Miro protein level and axonal transport of mitochondria.</title>
        <authorList>
            <person name="Liu S."/>
            <person name="Sawada T."/>
            <person name="Lee S."/>
            <person name="Yu W."/>
            <person name="Silverio G."/>
            <person name="Alapatt P."/>
            <person name="Millan I."/>
            <person name="Shen A."/>
            <person name="Saxton W."/>
            <person name="Kanao T."/>
            <person name="Takahashi R."/>
            <person name="Hattori N."/>
            <person name="Imai Y."/>
            <person name="Lu B."/>
        </authorList>
    </citation>
    <scope>FUNCTION</scope>
    <scope>UBIQUITINATION</scope>
    <scope>MUTAGENESIS OF SER-156</scope>
</reference>
<reference key="13">
    <citation type="journal article" date="2014" name="Cell">
        <title>Glucose regulates mitochondrial motility via Milton modification by O-GlcNAc transferase.</title>
        <authorList>
            <person name="Pekkurnaz G."/>
            <person name="Trinidad J.C."/>
            <person name="Wang X."/>
            <person name="Kong D."/>
            <person name="Schwarz T.L."/>
        </authorList>
    </citation>
    <scope>INTERACTION WITH KIF5B; OGT; RHOT2 AND TRAK1</scope>
</reference>
<reference key="14">
    <citation type="journal article" date="2014" name="J. Proteomics">
        <title>An enzyme assisted RP-RPLC approach for in-depth analysis of human liver phosphoproteome.</title>
        <authorList>
            <person name="Bian Y."/>
            <person name="Song C."/>
            <person name="Cheng K."/>
            <person name="Dong M."/>
            <person name="Wang F."/>
            <person name="Huang J."/>
            <person name="Sun D."/>
            <person name="Wang L."/>
            <person name="Ye M."/>
            <person name="Zou H."/>
        </authorList>
    </citation>
    <scope>IDENTIFICATION BY MASS SPECTROMETRY [LARGE SCALE ANALYSIS]</scope>
    <source>
        <tissue>Liver</tissue>
    </source>
</reference>
<reference key="15">
    <citation type="journal article" date="2014" name="Nature">
        <title>The mitochondrial deubiquitinase USP30 opposes parkin-mediated mitophagy.</title>
        <authorList>
            <person name="Bingol B."/>
            <person name="Tea J.S."/>
            <person name="Phu L."/>
            <person name="Reichelt M."/>
            <person name="Bakalarski C.E."/>
            <person name="Song Q."/>
            <person name="Foreman O."/>
            <person name="Kirkpatrick D.S."/>
            <person name="Sheng M."/>
        </authorList>
    </citation>
    <scope>UBIQUITINATION</scope>
    <scope>DEUBIQUITINATION</scope>
</reference>
<reference key="16">
    <citation type="journal article" date="2015" name="Proteomics">
        <title>N-terminome analysis of the human mitochondrial proteome.</title>
        <authorList>
            <person name="Vaca Jacome A.S."/>
            <person name="Rabilloud T."/>
            <person name="Schaeffer-Reiss C."/>
            <person name="Rompais M."/>
            <person name="Ayoub D."/>
            <person name="Lane L."/>
            <person name="Bairoch A."/>
            <person name="Van Dorsselaer A."/>
            <person name="Carapito C."/>
        </authorList>
    </citation>
    <scope>IDENTIFICATION BY MASS SPECTROMETRY [LARGE SCALE ANALYSIS]</scope>
</reference>
<reference key="17">
    <citation type="journal article" date="2016" name="PLoS Genet.">
        <title>Vimar Is a Novel Regulator of Mitochondrial Fission through Miro.</title>
        <authorList>
            <person name="Ding L."/>
            <person name="Lei Y."/>
            <person name="Han Y."/>
            <person name="Li Y."/>
            <person name="Ji X."/>
            <person name="Liu L."/>
        </authorList>
    </citation>
    <scope>FUNCTION</scope>
    <scope>INTERACTION WITH RAP1GDS1</scope>
</reference>
<reference key="18">
    <citation type="journal article" date="2018" name="Int. J. Mol. Sci.">
        <title>Human Miro Proteins Act as NTP Hydrolases through a Novel, Non-Canonical Catalytic Mechanism.</title>
        <authorList>
            <person name="Peters D.T."/>
            <person name="Kay L."/>
            <person name="Eswaran J."/>
            <person name="Lakey J.H."/>
            <person name="Soundararajan M."/>
        </authorList>
    </citation>
    <scope>FUNCTION</scope>
    <scope>CATALYTIC ACTIVITY</scope>
</reference>
<reference evidence="25 26 27 28 29 30" key="19">
    <citation type="journal article" date="2016" name="Sci. Rep.">
        <title>Structural insights into Parkin substrate lysine targeting from minimal Miro substrates.</title>
        <authorList>
            <person name="Klosowiak J.L."/>
            <person name="Park S."/>
            <person name="Smith K.P."/>
            <person name="French M.E."/>
            <person name="Focia P.J."/>
            <person name="Freymann D.M."/>
            <person name="Rice S.E."/>
        </authorList>
    </citation>
    <scope>X-RAY CRYSTALLOGRAPHY (2.16 ANGSTROMS) OF 411-592 IN COMPLEX WITH CA(2+); GDP AND MG(2+)</scope>
    <scope>SUBUNIT</scope>
    <scope>UBIQUITINATION AT LYS-153; LYS-235 AND LYS-572</scope>
</reference>
<reference evidence="31" key="20">
    <citation type="journal article" date="2020" name="J. Struct. Biol.">
        <title>Insight into human Miro1/2 domain organization based on the structure of its N-terminal GTPase.</title>
        <authorList>
            <person name="Smith K.P."/>
            <person name="Focia P.J."/>
            <person name="Chakravarthy S."/>
            <person name="Landahl E.C."/>
            <person name="Klosowiak J.L."/>
            <person name="Rice S.E."/>
            <person name="Freymann D.M."/>
        </authorList>
    </citation>
    <scope>X-RAY CRYSTALLOGRAPHY (1.72 ANGSTROMS) OF 2-180 IN COMPLEX WITH GTP AND MG(2+)</scope>
    <scope>SUBUNIT</scope>
</reference>
<accession>Q8IXI2</accession>
<accession>A4FVB6</accession>
<accession>A6NFV0</accession>
<accession>B4DG48</accession>
<accession>J9JIH9</accession>
<accession>Q6NUR3</accession>
<accession>Q6P9F8</accession>
<accession>Q6PJG1</accession>
<accession>Q6YMW8</accession>
<accession>Q86UB0</accession>
<accession>Q8IW28</accession>
<accession>Q8IXJ7</accession>
<accession>Q9H067</accession>
<accession>Q9H9N8</accession>
<accession>Q9NUZ2</accession>
<evidence type="ECO:0000250" key="1">
    <source>
        <dbReference type="UniProtKB" id="A1L1L6"/>
    </source>
</evidence>
<evidence type="ECO:0000250" key="2">
    <source>
        <dbReference type="UniProtKB" id="Q8BG51"/>
    </source>
</evidence>
<evidence type="ECO:0000255" key="3"/>
<evidence type="ECO:0000255" key="4">
    <source>
        <dbReference type="PROSITE-ProRule" id="PRU00448"/>
    </source>
</evidence>
<evidence type="ECO:0000255" key="5">
    <source>
        <dbReference type="PROSITE-ProRule" id="PRU00757"/>
    </source>
</evidence>
<evidence type="ECO:0000269" key="6">
    <source>
    </source>
</evidence>
<evidence type="ECO:0000269" key="7">
    <source>
    </source>
</evidence>
<evidence type="ECO:0000269" key="8">
    <source>
    </source>
</evidence>
<evidence type="ECO:0000269" key="9">
    <source>
    </source>
</evidence>
<evidence type="ECO:0000269" key="10">
    <source>
    </source>
</evidence>
<evidence type="ECO:0000269" key="11">
    <source>
    </source>
</evidence>
<evidence type="ECO:0000269" key="12">
    <source>
    </source>
</evidence>
<evidence type="ECO:0000269" key="13">
    <source>
    </source>
</evidence>
<evidence type="ECO:0000269" key="14">
    <source>
    </source>
</evidence>
<evidence type="ECO:0000269" key="15">
    <source>
    </source>
</evidence>
<evidence type="ECO:0000269" key="16">
    <source>
    </source>
</evidence>
<evidence type="ECO:0000303" key="17">
    <source>
    </source>
</evidence>
<evidence type="ECO:0000303" key="18">
    <source>
    </source>
</evidence>
<evidence type="ECO:0000303" key="19">
    <source>
    </source>
</evidence>
<evidence type="ECO:0000303" key="20">
    <source>
    </source>
</evidence>
<evidence type="ECO:0000303" key="21">
    <source ref="3"/>
</evidence>
<evidence type="ECO:0000305" key="22"/>
<evidence type="ECO:0000305" key="23">
    <source>
    </source>
</evidence>
<evidence type="ECO:0000305" key="24">
    <source>
    </source>
</evidence>
<evidence type="ECO:0007744" key="25">
    <source>
        <dbReference type="PDB" id="5KSO"/>
    </source>
</evidence>
<evidence type="ECO:0007744" key="26">
    <source>
        <dbReference type="PDB" id="5KSP"/>
    </source>
</evidence>
<evidence type="ECO:0007744" key="27">
    <source>
        <dbReference type="PDB" id="5KSY"/>
    </source>
</evidence>
<evidence type="ECO:0007744" key="28">
    <source>
        <dbReference type="PDB" id="5KSZ"/>
    </source>
</evidence>
<evidence type="ECO:0007744" key="29">
    <source>
        <dbReference type="PDB" id="5KTY"/>
    </source>
</evidence>
<evidence type="ECO:0007744" key="30">
    <source>
        <dbReference type="PDB" id="5KU1"/>
    </source>
</evidence>
<evidence type="ECO:0007744" key="31">
    <source>
        <dbReference type="PDB" id="6D71"/>
    </source>
</evidence>
<evidence type="ECO:0007829" key="32">
    <source>
        <dbReference type="PDB" id="5KSP"/>
    </source>
</evidence>
<evidence type="ECO:0007829" key="33">
    <source>
        <dbReference type="PDB" id="5KSZ"/>
    </source>
</evidence>
<evidence type="ECO:0007829" key="34">
    <source>
        <dbReference type="PDB" id="5KU1"/>
    </source>
</evidence>
<evidence type="ECO:0007829" key="35">
    <source>
        <dbReference type="PDB" id="6D71"/>
    </source>
</evidence>